<feature type="chain" id="PRO_1000045844" description="Flagellar hook-basal body complex protein FliE">
    <location>
        <begin position="1"/>
        <end position="111"/>
    </location>
</feature>
<name>FLIE_BRUAB</name>
<reference key="1">
    <citation type="journal article" date="2005" name="J. Bacteriol.">
        <title>Completion of the genome sequence of Brucella abortus and comparison to the highly similar genomes of Brucella melitensis and Brucella suis.</title>
        <authorList>
            <person name="Halling S.M."/>
            <person name="Peterson-Burch B.D."/>
            <person name="Bricker B.J."/>
            <person name="Zuerner R.L."/>
            <person name="Qing Z."/>
            <person name="Li L.-L."/>
            <person name="Kapur V."/>
            <person name="Alt D.P."/>
            <person name="Olsen S.C."/>
        </authorList>
    </citation>
    <scope>NUCLEOTIDE SEQUENCE [LARGE SCALE GENOMIC DNA]</scope>
    <source>
        <strain>9-941</strain>
    </source>
</reference>
<organism>
    <name type="scientific">Brucella abortus biovar 1 (strain 9-941)</name>
    <dbReference type="NCBI Taxonomy" id="262698"/>
    <lineage>
        <taxon>Bacteria</taxon>
        <taxon>Pseudomonadati</taxon>
        <taxon>Pseudomonadota</taxon>
        <taxon>Alphaproteobacteria</taxon>
        <taxon>Hyphomicrobiales</taxon>
        <taxon>Brucellaceae</taxon>
        <taxon>Brucella/Ochrobactrum group</taxon>
        <taxon>Brucella</taxon>
    </lineage>
</organism>
<accession>Q579U0</accession>
<comment type="subcellular location">
    <subcellularLocation>
        <location evidence="1">Bacterial flagellum basal body</location>
    </subcellularLocation>
</comment>
<comment type="similarity">
    <text evidence="1">Belongs to the FliE family.</text>
</comment>
<keyword id="KW-0975">Bacterial flagellum</keyword>
<protein>
    <recommendedName>
        <fullName evidence="1">Flagellar hook-basal body complex protein FliE</fullName>
    </recommendedName>
</protein>
<gene>
    <name evidence="1" type="primary">fliE</name>
    <name type="ordered locus">BruAb2_0149</name>
</gene>
<dbReference type="EMBL" id="AE017224">
    <property type="protein sequence ID" value="AAX75594.1"/>
    <property type="molecule type" value="Genomic_DNA"/>
</dbReference>
<dbReference type="RefSeq" id="WP_002966429.1">
    <property type="nucleotide sequence ID" value="NC_006933.1"/>
</dbReference>
<dbReference type="SMR" id="Q579U0"/>
<dbReference type="EnsemblBacteria" id="AAX75594">
    <property type="protein sequence ID" value="AAX75594"/>
    <property type="gene ID" value="BruAb2_0149"/>
</dbReference>
<dbReference type="KEGG" id="bmb:BruAb2_0149"/>
<dbReference type="HOGENOM" id="CLU_147249_2_0_5"/>
<dbReference type="Proteomes" id="UP000000540">
    <property type="component" value="Chromosome II"/>
</dbReference>
<dbReference type="GO" id="GO:0009425">
    <property type="term" value="C:bacterial-type flagellum basal body"/>
    <property type="evidence" value="ECO:0007669"/>
    <property type="project" value="UniProtKB-SubCell"/>
</dbReference>
<dbReference type="GO" id="GO:0003774">
    <property type="term" value="F:cytoskeletal motor activity"/>
    <property type="evidence" value="ECO:0007669"/>
    <property type="project" value="InterPro"/>
</dbReference>
<dbReference type="GO" id="GO:0005198">
    <property type="term" value="F:structural molecule activity"/>
    <property type="evidence" value="ECO:0007669"/>
    <property type="project" value="InterPro"/>
</dbReference>
<dbReference type="GO" id="GO:0071973">
    <property type="term" value="P:bacterial-type flagellum-dependent cell motility"/>
    <property type="evidence" value="ECO:0007669"/>
    <property type="project" value="InterPro"/>
</dbReference>
<dbReference type="HAMAP" id="MF_00724">
    <property type="entry name" value="FliE"/>
    <property type="match status" value="1"/>
</dbReference>
<dbReference type="InterPro" id="IPR001624">
    <property type="entry name" value="FliE"/>
</dbReference>
<dbReference type="PANTHER" id="PTHR34653">
    <property type="match status" value="1"/>
</dbReference>
<dbReference type="PANTHER" id="PTHR34653:SF1">
    <property type="entry name" value="FLAGELLAR HOOK-BASAL BODY COMPLEX PROTEIN FLIE"/>
    <property type="match status" value="1"/>
</dbReference>
<dbReference type="Pfam" id="PF02049">
    <property type="entry name" value="FliE"/>
    <property type="match status" value="1"/>
</dbReference>
<dbReference type="PRINTS" id="PR01006">
    <property type="entry name" value="FLGHOOKFLIE"/>
</dbReference>
<sequence>MYDSIMSVSARNALSRLSETVAEKGVGSASAPQAVPAAPGASFGEVLSQMTGSVSQKLQAAEATSIQGIKGDAPVRDVVSSVMEAEQSLQTAIAIRDKIVQAYLEISRMPI</sequence>
<evidence type="ECO:0000255" key="1">
    <source>
        <dbReference type="HAMAP-Rule" id="MF_00724"/>
    </source>
</evidence>
<proteinExistence type="inferred from homology"/>